<comment type="function">
    <text evidence="1">Catalyzes the attachment of proline to tRNA(Pro) in a two-step reaction: proline is first activated by ATP to form Pro-AMP and then transferred to the acceptor end of tRNA(Pro). As ProRS can inadvertently accommodate and process non-cognate amino acids such as alanine and cysteine, to avoid such errors it has two additional distinct editing activities against alanine. One activity is designated as 'pretransfer' editing and involves the tRNA(Pro)-independent hydrolysis of activated Ala-AMP. The other activity is designated 'posttransfer' editing and involves deacylation of mischarged Ala-tRNA(Pro). The misacylated Cys-tRNA(Pro) is not edited by ProRS.</text>
</comment>
<comment type="catalytic activity">
    <reaction evidence="1">
        <text>tRNA(Pro) + L-proline + ATP = L-prolyl-tRNA(Pro) + AMP + diphosphate</text>
        <dbReference type="Rhea" id="RHEA:14305"/>
        <dbReference type="Rhea" id="RHEA-COMP:9700"/>
        <dbReference type="Rhea" id="RHEA-COMP:9702"/>
        <dbReference type="ChEBI" id="CHEBI:30616"/>
        <dbReference type="ChEBI" id="CHEBI:33019"/>
        <dbReference type="ChEBI" id="CHEBI:60039"/>
        <dbReference type="ChEBI" id="CHEBI:78442"/>
        <dbReference type="ChEBI" id="CHEBI:78532"/>
        <dbReference type="ChEBI" id="CHEBI:456215"/>
        <dbReference type="EC" id="6.1.1.15"/>
    </reaction>
</comment>
<comment type="subunit">
    <text evidence="1">Homodimer.</text>
</comment>
<comment type="subcellular location">
    <subcellularLocation>
        <location evidence="1">Cytoplasm</location>
    </subcellularLocation>
</comment>
<comment type="domain">
    <text evidence="1">Consists of three domains: the N-terminal catalytic domain, the editing domain and the C-terminal anticodon-binding domain.</text>
</comment>
<comment type="similarity">
    <text evidence="1">Belongs to the class-II aminoacyl-tRNA synthetase family. ProS type 1 subfamily.</text>
</comment>
<gene>
    <name evidence="1" type="primary">proS</name>
    <name type="ordered locus">BURPS1710b_3518</name>
</gene>
<proteinExistence type="inferred from homology"/>
<accession>Q3JNG4</accession>
<sequence length="578" mass="63420">MKASRFFIGTLKEAPADAEIVSHKLMVRAGMIRRVAGGIYNYLPVGLRSIRKVEAIVREEMNRAGAIELLMPAVQPAELWQESGRWEQYGPELLRFKDRKQNEFVIGPTHEEVVTDIARNQIKSYRQMPVNFYQIQTKFRDEIRPRFGVMRGREFIMKDAYSFDKDHESLKESYKKMYDAYVRIFTRIGLEFRPVAADNGSIGGSGSHEFHVIADTGEDAIAYCPTSDFAANVEAAEALPLLASRAAPAEAMQKVATPGKAKCEAVAELMGIPLERTIKSIVLATDNEGAEPTIWLLMLRGDHDLNEIKTAKLPGLAGHRFATEAEIVEWFGTPPGYLGPIGTKKPVRVVADRTVANMSDFVVGANEVDYHIAGVNWGRDLPEPVVADIRNVKAGDPSPDGKGALDICRGIEVGHVFQLGTKYSDAMGATFIDESGKAQPMVMGCYGIGITRILGAAIEQNFDDKGIVWPEAIAPFEVVLCPMGYDRSDAVREAADKLYADLAAAGIDVILDDRGERPGVMFADWELIGVPHRLVIGERGLKDGKIEYQGRRDAEATLLPADSAAAAVAEKVRAALAR</sequence>
<feature type="chain" id="PRO_0000248660" description="Proline--tRNA ligase">
    <location>
        <begin position="1"/>
        <end position="578"/>
    </location>
</feature>
<protein>
    <recommendedName>
        <fullName evidence="1">Proline--tRNA ligase</fullName>
        <ecNumber evidence="1">6.1.1.15</ecNumber>
    </recommendedName>
    <alternativeName>
        <fullName evidence="1">Prolyl-tRNA synthetase</fullName>
        <shortName evidence="1">ProRS</shortName>
    </alternativeName>
</protein>
<reference key="1">
    <citation type="journal article" date="2010" name="Genome Biol. Evol.">
        <title>Continuing evolution of Burkholderia mallei through genome reduction and large-scale rearrangements.</title>
        <authorList>
            <person name="Losada L."/>
            <person name="Ronning C.M."/>
            <person name="DeShazer D."/>
            <person name="Woods D."/>
            <person name="Fedorova N."/>
            <person name="Kim H.S."/>
            <person name="Shabalina S.A."/>
            <person name="Pearson T.R."/>
            <person name="Brinkac L."/>
            <person name="Tan P."/>
            <person name="Nandi T."/>
            <person name="Crabtree J."/>
            <person name="Badger J."/>
            <person name="Beckstrom-Sternberg S."/>
            <person name="Saqib M."/>
            <person name="Schutzer S.E."/>
            <person name="Keim P."/>
            <person name="Nierman W.C."/>
        </authorList>
    </citation>
    <scope>NUCLEOTIDE SEQUENCE [LARGE SCALE GENOMIC DNA]</scope>
    <source>
        <strain>1710b</strain>
    </source>
</reference>
<organism>
    <name type="scientific">Burkholderia pseudomallei (strain 1710b)</name>
    <dbReference type="NCBI Taxonomy" id="320372"/>
    <lineage>
        <taxon>Bacteria</taxon>
        <taxon>Pseudomonadati</taxon>
        <taxon>Pseudomonadota</taxon>
        <taxon>Betaproteobacteria</taxon>
        <taxon>Burkholderiales</taxon>
        <taxon>Burkholderiaceae</taxon>
        <taxon>Burkholderia</taxon>
        <taxon>pseudomallei group</taxon>
    </lineage>
</organism>
<evidence type="ECO:0000255" key="1">
    <source>
        <dbReference type="HAMAP-Rule" id="MF_01569"/>
    </source>
</evidence>
<name>SYP_BURP1</name>
<dbReference type="EC" id="6.1.1.15" evidence="1"/>
<dbReference type="EMBL" id="CP000124">
    <property type="protein sequence ID" value="ABA47615.1"/>
    <property type="molecule type" value="Genomic_DNA"/>
</dbReference>
<dbReference type="RefSeq" id="WP_004194217.1">
    <property type="nucleotide sequence ID" value="NC_007434.1"/>
</dbReference>
<dbReference type="SMR" id="Q3JNG4"/>
<dbReference type="EnsemblBacteria" id="ABA47615">
    <property type="protein sequence ID" value="ABA47615"/>
    <property type="gene ID" value="BURPS1710b_3518"/>
</dbReference>
<dbReference type="KEGG" id="bpm:BURPS1710b_3518"/>
<dbReference type="HOGENOM" id="CLU_016739_0_0_4"/>
<dbReference type="Proteomes" id="UP000002700">
    <property type="component" value="Chromosome I"/>
</dbReference>
<dbReference type="GO" id="GO:0005829">
    <property type="term" value="C:cytosol"/>
    <property type="evidence" value="ECO:0007669"/>
    <property type="project" value="TreeGrafter"/>
</dbReference>
<dbReference type="GO" id="GO:0002161">
    <property type="term" value="F:aminoacyl-tRNA deacylase activity"/>
    <property type="evidence" value="ECO:0007669"/>
    <property type="project" value="InterPro"/>
</dbReference>
<dbReference type="GO" id="GO:0005524">
    <property type="term" value="F:ATP binding"/>
    <property type="evidence" value="ECO:0007669"/>
    <property type="project" value="UniProtKB-UniRule"/>
</dbReference>
<dbReference type="GO" id="GO:0004827">
    <property type="term" value="F:proline-tRNA ligase activity"/>
    <property type="evidence" value="ECO:0007669"/>
    <property type="project" value="UniProtKB-UniRule"/>
</dbReference>
<dbReference type="GO" id="GO:0006433">
    <property type="term" value="P:prolyl-tRNA aminoacylation"/>
    <property type="evidence" value="ECO:0007669"/>
    <property type="project" value="UniProtKB-UniRule"/>
</dbReference>
<dbReference type="CDD" id="cd04334">
    <property type="entry name" value="ProRS-INS"/>
    <property type="match status" value="1"/>
</dbReference>
<dbReference type="CDD" id="cd00861">
    <property type="entry name" value="ProRS_anticodon_short"/>
    <property type="match status" value="1"/>
</dbReference>
<dbReference type="CDD" id="cd00779">
    <property type="entry name" value="ProRS_core_prok"/>
    <property type="match status" value="1"/>
</dbReference>
<dbReference type="FunFam" id="3.30.930.10:FF:000043">
    <property type="entry name" value="Proline--tRNA ligase"/>
    <property type="match status" value="1"/>
</dbReference>
<dbReference type="FunFam" id="3.30.930.10:FF:000097">
    <property type="entry name" value="Proline--tRNA ligase"/>
    <property type="match status" value="1"/>
</dbReference>
<dbReference type="Gene3D" id="3.40.50.800">
    <property type="entry name" value="Anticodon-binding domain"/>
    <property type="match status" value="1"/>
</dbReference>
<dbReference type="Gene3D" id="3.30.930.10">
    <property type="entry name" value="Bira Bifunctional Protein, Domain 2"/>
    <property type="match status" value="2"/>
</dbReference>
<dbReference type="Gene3D" id="3.90.960.10">
    <property type="entry name" value="YbaK/aminoacyl-tRNA synthetase-associated domain"/>
    <property type="match status" value="1"/>
</dbReference>
<dbReference type="HAMAP" id="MF_01569">
    <property type="entry name" value="Pro_tRNA_synth_type1"/>
    <property type="match status" value="1"/>
</dbReference>
<dbReference type="InterPro" id="IPR002314">
    <property type="entry name" value="aa-tRNA-synt_IIb"/>
</dbReference>
<dbReference type="InterPro" id="IPR006195">
    <property type="entry name" value="aa-tRNA-synth_II"/>
</dbReference>
<dbReference type="InterPro" id="IPR045864">
    <property type="entry name" value="aa-tRNA-synth_II/BPL/LPL"/>
</dbReference>
<dbReference type="InterPro" id="IPR004154">
    <property type="entry name" value="Anticodon-bd"/>
</dbReference>
<dbReference type="InterPro" id="IPR036621">
    <property type="entry name" value="Anticodon-bd_dom_sf"/>
</dbReference>
<dbReference type="InterPro" id="IPR002316">
    <property type="entry name" value="Pro-tRNA-ligase_IIa"/>
</dbReference>
<dbReference type="InterPro" id="IPR004500">
    <property type="entry name" value="Pro-tRNA-synth_IIa_bac-type"/>
</dbReference>
<dbReference type="InterPro" id="IPR023717">
    <property type="entry name" value="Pro-tRNA-Synthase_IIa_type1"/>
</dbReference>
<dbReference type="InterPro" id="IPR050062">
    <property type="entry name" value="Pro-tRNA_synthetase"/>
</dbReference>
<dbReference type="InterPro" id="IPR044140">
    <property type="entry name" value="ProRS_anticodon_short"/>
</dbReference>
<dbReference type="InterPro" id="IPR033730">
    <property type="entry name" value="ProRS_core_prok"/>
</dbReference>
<dbReference type="InterPro" id="IPR036754">
    <property type="entry name" value="YbaK/aa-tRNA-synt-asso_dom_sf"/>
</dbReference>
<dbReference type="InterPro" id="IPR007214">
    <property type="entry name" value="YbaK/aa-tRNA-synth-assoc-dom"/>
</dbReference>
<dbReference type="NCBIfam" id="NF006625">
    <property type="entry name" value="PRK09194.1"/>
    <property type="match status" value="1"/>
</dbReference>
<dbReference type="NCBIfam" id="TIGR00409">
    <property type="entry name" value="proS_fam_II"/>
    <property type="match status" value="1"/>
</dbReference>
<dbReference type="PANTHER" id="PTHR42753">
    <property type="entry name" value="MITOCHONDRIAL RIBOSOME PROTEIN L39/PROLYL-TRNA LIGASE FAMILY MEMBER"/>
    <property type="match status" value="1"/>
</dbReference>
<dbReference type="PANTHER" id="PTHR42753:SF2">
    <property type="entry name" value="PROLINE--TRNA LIGASE"/>
    <property type="match status" value="1"/>
</dbReference>
<dbReference type="Pfam" id="PF03129">
    <property type="entry name" value="HGTP_anticodon"/>
    <property type="match status" value="1"/>
</dbReference>
<dbReference type="Pfam" id="PF00587">
    <property type="entry name" value="tRNA-synt_2b"/>
    <property type="match status" value="1"/>
</dbReference>
<dbReference type="Pfam" id="PF04073">
    <property type="entry name" value="tRNA_edit"/>
    <property type="match status" value="1"/>
</dbReference>
<dbReference type="PIRSF" id="PIRSF001535">
    <property type="entry name" value="ProRS_1"/>
    <property type="match status" value="1"/>
</dbReference>
<dbReference type="PRINTS" id="PR01046">
    <property type="entry name" value="TRNASYNTHPRO"/>
</dbReference>
<dbReference type="SUPFAM" id="SSF52954">
    <property type="entry name" value="Class II aaRS ABD-related"/>
    <property type="match status" value="1"/>
</dbReference>
<dbReference type="SUPFAM" id="SSF55681">
    <property type="entry name" value="Class II aaRS and biotin synthetases"/>
    <property type="match status" value="1"/>
</dbReference>
<dbReference type="SUPFAM" id="SSF55826">
    <property type="entry name" value="YbaK/ProRS associated domain"/>
    <property type="match status" value="1"/>
</dbReference>
<dbReference type="PROSITE" id="PS50862">
    <property type="entry name" value="AA_TRNA_LIGASE_II"/>
    <property type="match status" value="1"/>
</dbReference>
<keyword id="KW-0030">Aminoacyl-tRNA synthetase</keyword>
<keyword id="KW-0067">ATP-binding</keyword>
<keyword id="KW-0963">Cytoplasm</keyword>
<keyword id="KW-0436">Ligase</keyword>
<keyword id="KW-0547">Nucleotide-binding</keyword>
<keyword id="KW-0648">Protein biosynthesis</keyword>